<sequence length="350" mass="39287">MQVSDFHFELPDELIARYPQPERTASRLLHLNGNSGELHDGQFTDVLDLVQHGDLVVFNNTRVIPARMFGVKASGGKLEVLVERVLDDHSVLAHVRCSKSPKPGNQLWLGENQEYEAEMVARHDTLFEIRFTSEKKVLDILDEIGHMPLPPYIDRPDEDADKERYQTVYNEKPGAVAAPTAGLHFDTDILEKMKAKGVEFAYVTLHVGAGTFQPVRVDNILDHHMHSEYAEVSQEVVDAIKATKARGGRVISVGTTSVRSLESAAQHALKQGTELAPFFDDTEIFIYPGYEFQVVDALVTNFHLPESTLIMLVSAFAGYDNTMKAYDQAVNHQYRFFSYGDAMFITKKTS</sequence>
<feature type="chain" id="PRO_1000094748" description="S-adenosylmethionine:tRNA ribosyltransferase-isomerase">
    <location>
        <begin position="1"/>
        <end position="350"/>
    </location>
</feature>
<gene>
    <name evidence="1" type="primary">queA</name>
    <name type="ordered locus">VSAL_I2436</name>
</gene>
<reference key="1">
    <citation type="journal article" date="2008" name="BMC Genomics">
        <title>The genome sequence of the fish pathogen Aliivibrio salmonicida strain LFI1238 shows extensive evidence of gene decay.</title>
        <authorList>
            <person name="Hjerde E."/>
            <person name="Lorentzen M.S."/>
            <person name="Holden M.T."/>
            <person name="Seeger K."/>
            <person name="Paulsen S."/>
            <person name="Bason N."/>
            <person name="Churcher C."/>
            <person name="Harris D."/>
            <person name="Norbertczak H."/>
            <person name="Quail M.A."/>
            <person name="Sanders S."/>
            <person name="Thurston S."/>
            <person name="Parkhill J."/>
            <person name="Willassen N.P."/>
            <person name="Thomson N.R."/>
        </authorList>
    </citation>
    <scope>NUCLEOTIDE SEQUENCE [LARGE SCALE GENOMIC DNA]</scope>
    <source>
        <strain>LFI1238</strain>
    </source>
</reference>
<name>QUEA_ALISL</name>
<comment type="function">
    <text evidence="1">Transfers and isomerizes the ribose moiety from AdoMet to the 7-aminomethyl group of 7-deazaguanine (preQ1-tRNA) to give epoxyqueuosine (oQ-tRNA).</text>
</comment>
<comment type="catalytic activity">
    <reaction evidence="1">
        <text>7-aminomethyl-7-carbaguanosine(34) in tRNA + S-adenosyl-L-methionine = epoxyqueuosine(34) in tRNA + adenine + L-methionine + 2 H(+)</text>
        <dbReference type="Rhea" id="RHEA:32155"/>
        <dbReference type="Rhea" id="RHEA-COMP:10342"/>
        <dbReference type="Rhea" id="RHEA-COMP:18582"/>
        <dbReference type="ChEBI" id="CHEBI:15378"/>
        <dbReference type="ChEBI" id="CHEBI:16708"/>
        <dbReference type="ChEBI" id="CHEBI:57844"/>
        <dbReference type="ChEBI" id="CHEBI:59789"/>
        <dbReference type="ChEBI" id="CHEBI:82833"/>
        <dbReference type="ChEBI" id="CHEBI:194443"/>
        <dbReference type="EC" id="2.4.99.17"/>
    </reaction>
</comment>
<comment type="pathway">
    <text evidence="1">tRNA modification; tRNA-queuosine biosynthesis.</text>
</comment>
<comment type="subunit">
    <text evidence="1">Monomer.</text>
</comment>
<comment type="subcellular location">
    <subcellularLocation>
        <location evidence="1">Cytoplasm</location>
    </subcellularLocation>
</comment>
<comment type="similarity">
    <text evidence="1">Belongs to the QueA family.</text>
</comment>
<accession>B6EK66</accession>
<proteinExistence type="inferred from homology"/>
<keyword id="KW-0963">Cytoplasm</keyword>
<keyword id="KW-0671">Queuosine biosynthesis</keyword>
<keyword id="KW-0949">S-adenosyl-L-methionine</keyword>
<keyword id="KW-0808">Transferase</keyword>
<organism>
    <name type="scientific">Aliivibrio salmonicida (strain LFI1238)</name>
    <name type="common">Vibrio salmonicida (strain LFI1238)</name>
    <dbReference type="NCBI Taxonomy" id="316275"/>
    <lineage>
        <taxon>Bacteria</taxon>
        <taxon>Pseudomonadati</taxon>
        <taxon>Pseudomonadota</taxon>
        <taxon>Gammaproteobacteria</taxon>
        <taxon>Vibrionales</taxon>
        <taxon>Vibrionaceae</taxon>
        <taxon>Aliivibrio</taxon>
    </lineage>
</organism>
<evidence type="ECO:0000255" key="1">
    <source>
        <dbReference type="HAMAP-Rule" id="MF_00113"/>
    </source>
</evidence>
<dbReference type="EC" id="2.4.99.17" evidence="1"/>
<dbReference type="EMBL" id="FM178379">
    <property type="protein sequence ID" value="CAQ80120.1"/>
    <property type="molecule type" value="Genomic_DNA"/>
</dbReference>
<dbReference type="RefSeq" id="WP_012550923.1">
    <property type="nucleotide sequence ID" value="NC_011312.1"/>
</dbReference>
<dbReference type="SMR" id="B6EK66"/>
<dbReference type="KEGG" id="vsa:VSAL_I2436"/>
<dbReference type="eggNOG" id="COG0809">
    <property type="taxonomic scope" value="Bacteria"/>
</dbReference>
<dbReference type="HOGENOM" id="CLU_039110_1_0_6"/>
<dbReference type="UniPathway" id="UPA00392"/>
<dbReference type="Proteomes" id="UP000001730">
    <property type="component" value="Chromosome 1"/>
</dbReference>
<dbReference type="GO" id="GO:0005737">
    <property type="term" value="C:cytoplasm"/>
    <property type="evidence" value="ECO:0007669"/>
    <property type="project" value="UniProtKB-SubCell"/>
</dbReference>
<dbReference type="GO" id="GO:0051075">
    <property type="term" value="F:S-adenosylmethionine:tRNA ribosyltransferase-isomerase activity"/>
    <property type="evidence" value="ECO:0007669"/>
    <property type="project" value="UniProtKB-EC"/>
</dbReference>
<dbReference type="GO" id="GO:0008616">
    <property type="term" value="P:queuosine biosynthetic process"/>
    <property type="evidence" value="ECO:0007669"/>
    <property type="project" value="UniProtKB-UniRule"/>
</dbReference>
<dbReference type="GO" id="GO:0002099">
    <property type="term" value="P:tRNA wobble guanine modification"/>
    <property type="evidence" value="ECO:0007669"/>
    <property type="project" value="TreeGrafter"/>
</dbReference>
<dbReference type="FunFam" id="2.40.10.240:FF:000001">
    <property type="entry name" value="S-adenosylmethionine:tRNA ribosyltransferase-isomerase"/>
    <property type="match status" value="1"/>
</dbReference>
<dbReference type="FunFam" id="3.40.1780.10:FF:000001">
    <property type="entry name" value="S-adenosylmethionine:tRNA ribosyltransferase-isomerase"/>
    <property type="match status" value="1"/>
</dbReference>
<dbReference type="Gene3D" id="2.40.10.240">
    <property type="entry name" value="QueA-like"/>
    <property type="match status" value="1"/>
</dbReference>
<dbReference type="Gene3D" id="3.40.1780.10">
    <property type="entry name" value="QueA-like"/>
    <property type="match status" value="1"/>
</dbReference>
<dbReference type="HAMAP" id="MF_00113">
    <property type="entry name" value="QueA"/>
    <property type="match status" value="1"/>
</dbReference>
<dbReference type="InterPro" id="IPR003699">
    <property type="entry name" value="QueA"/>
</dbReference>
<dbReference type="InterPro" id="IPR042118">
    <property type="entry name" value="QueA_dom1"/>
</dbReference>
<dbReference type="InterPro" id="IPR042119">
    <property type="entry name" value="QueA_dom2"/>
</dbReference>
<dbReference type="InterPro" id="IPR036100">
    <property type="entry name" value="QueA_sf"/>
</dbReference>
<dbReference type="NCBIfam" id="NF001140">
    <property type="entry name" value="PRK00147.1"/>
    <property type="match status" value="1"/>
</dbReference>
<dbReference type="NCBIfam" id="TIGR00113">
    <property type="entry name" value="queA"/>
    <property type="match status" value="1"/>
</dbReference>
<dbReference type="PANTHER" id="PTHR30307">
    <property type="entry name" value="S-ADENOSYLMETHIONINE:TRNA RIBOSYLTRANSFERASE-ISOMERASE"/>
    <property type="match status" value="1"/>
</dbReference>
<dbReference type="PANTHER" id="PTHR30307:SF0">
    <property type="entry name" value="S-ADENOSYLMETHIONINE:TRNA RIBOSYLTRANSFERASE-ISOMERASE"/>
    <property type="match status" value="1"/>
</dbReference>
<dbReference type="Pfam" id="PF02547">
    <property type="entry name" value="Queuosine_synth"/>
    <property type="match status" value="1"/>
</dbReference>
<dbReference type="SUPFAM" id="SSF111337">
    <property type="entry name" value="QueA-like"/>
    <property type="match status" value="1"/>
</dbReference>
<protein>
    <recommendedName>
        <fullName evidence="1">S-adenosylmethionine:tRNA ribosyltransferase-isomerase</fullName>
        <ecNumber evidence="1">2.4.99.17</ecNumber>
    </recommendedName>
    <alternativeName>
        <fullName evidence="1">Queuosine biosynthesis protein QueA</fullName>
    </alternativeName>
</protein>